<keyword id="KW-0131">Cell cycle</keyword>
<keyword id="KW-0132">Cell division</keyword>
<keyword id="KW-0175">Coiled coil</keyword>
<keyword id="KW-0963">Cytoplasm</keyword>
<keyword id="KW-0206">Cytoskeleton</keyword>
<keyword id="KW-0493">Microtubule</keyword>
<keyword id="KW-0498">Mitosis</keyword>
<keyword id="KW-1185">Reference proteome</keyword>
<keyword id="KW-0677">Repeat</keyword>
<keyword id="KW-0813">Transport</keyword>
<keyword id="KW-0853">WD repeat</keyword>
<name>LIS11_NEUCR</name>
<organism>
    <name type="scientific">Neurospora crassa (strain ATCC 24698 / 74-OR23-1A / CBS 708.71 / DSM 1257 / FGSC 987)</name>
    <dbReference type="NCBI Taxonomy" id="367110"/>
    <lineage>
        <taxon>Eukaryota</taxon>
        <taxon>Fungi</taxon>
        <taxon>Dikarya</taxon>
        <taxon>Ascomycota</taxon>
        <taxon>Pezizomycotina</taxon>
        <taxon>Sordariomycetes</taxon>
        <taxon>Sordariomycetidae</taxon>
        <taxon>Sordariales</taxon>
        <taxon>Sordariaceae</taxon>
        <taxon>Neurospora</taxon>
    </lineage>
</organism>
<gene>
    <name type="primary">nmp-1</name>
    <name evidence="1" type="synonym">lis1-1</name>
    <name type="synonym">mtb4A</name>
    <name type="synonym">nudf-2</name>
    <name type="synonym">pac1-1</name>
    <name type="synonym">ro-15</name>
    <name type="ORF">NCU04534</name>
</gene>
<accession>Q7RY30</accession>
<protein>
    <recommendedName>
        <fullName evidence="1">Nuclear distribution protein nudF-2</fullName>
    </recommendedName>
    <alternativeName>
        <fullName evidence="1">Lissencephaly-1 homolog 1</fullName>
        <shortName evidence="1">LIS-1 1</shortName>
    </alternativeName>
    <alternativeName>
        <fullName>Nuclear migration protein 1</fullName>
    </alternativeName>
    <alternativeName>
        <fullName evidence="1">nudF homolog 2</fullName>
    </alternativeName>
</protein>
<proteinExistence type="inferred from homology"/>
<feature type="chain" id="PRO_0000240427" description="Nuclear distribution protein nudF-2">
    <location>
        <begin position="1"/>
        <end position="453"/>
    </location>
</feature>
<feature type="domain" description="LisH" evidence="1">
    <location>
        <begin position="9"/>
        <end position="41"/>
    </location>
</feature>
<feature type="repeat" description="WD 1">
    <location>
        <begin position="112"/>
        <end position="153"/>
    </location>
</feature>
<feature type="repeat" description="WD 2">
    <location>
        <begin position="155"/>
        <end position="195"/>
    </location>
</feature>
<feature type="repeat" description="WD 3">
    <location>
        <begin position="199"/>
        <end position="239"/>
    </location>
</feature>
<feature type="repeat" description="WD 4">
    <location>
        <begin position="242"/>
        <end position="281"/>
    </location>
</feature>
<feature type="repeat" description="WD 5">
    <location>
        <begin position="286"/>
        <end position="345"/>
    </location>
</feature>
<feature type="repeat" description="WD 6">
    <location>
        <begin position="347"/>
        <end position="386"/>
    </location>
</feature>
<feature type="repeat" description="WD 7">
    <location>
        <begin position="391"/>
        <end position="449"/>
    </location>
</feature>
<feature type="region of interest" description="Disordered" evidence="2">
    <location>
        <begin position="84"/>
        <end position="107"/>
    </location>
</feature>
<feature type="coiled-coil region" evidence="1">
    <location>
        <begin position="62"/>
        <end position="88"/>
    </location>
</feature>
<sequence length="453" mass="49757">MSQILTSRQADELHRALIAYLTAANLPNTAAALREELNLSEEVFDPATAKKYEGLLEKKWTSVVRLQKKIMDLESRNHILQSELDNATPTSRQNKDPVAWLPRAPPRHTLQSHRDPITCVAFHPVFSSLASGSEDQTIKIWDWELGELERTIKGHTKAVLDVDYGGPRGNTLLASCSSDLTIKLWDPLDSYKNIRTLPGHDHSVSAVRFIPGSGNLLVSASRDKTLRIWDVSTGYCVKTLRGHAEWVRDVCPSLDGKYILSTSDDYTSRLWDVTITNPEPKVTLIGHEHVVLCCAIAPPAAYQNLAAMAGIKKPPATSSAEFMATGSRDKSIRLWDARGTCIKTLVGHDNWVRGLVFHPGGKYLLSVSDDKTLRCWDLTQEGKCVKTIGDAHGHFVQCIKWAPSVIKDASVNGDNGEPNGTPKKGGAAATPEAQIRCVIATGSVDLNVRIFAN</sequence>
<dbReference type="EMBL" id="CM002242">
    <property type="protein sequence ID" value="EAA27709.3"/>
    <property type="molecule type" value="Genomic_DNA"/>
</dbReference>
<dbReference type="RefSeq" id="XP_956945.3">
    <property type="nucleotide sequence ID" value="XM_951852.3"/>
</dbReference>
<dbReference type="SMR" id="Q7RY30"/>
<dbReference type="FunCoup" id="Q7RY30">
    <property type="interactions" value="46"/>
</dbReference>
<dbReference type="STRING" id="367110.Q7RY30"/>
<dbReference type="PaxDb" id="5141-EFNCRP00000005477"/>
<dbReference type="EnsemblFungi" id="EAA27709">
    <property type="protein sequence ID" value="EAA27709"/>
    <property type="gene ID" value="NCU04534"/>
</dbReference>
<dbReference type="GeneID" id="3873083"/>
<dbReference type="KEGG" id="ncr:NCU04534"/>
<dbReference type="VEuPathDB" id="FungiDB:NCU04534"/>
<dbReference type="HOGENOM" id="CLU_000288_57_15_1"/>
<dbReference type="InParanoid" id="Q7RY30"/>
<dbReference type="OrthoDB" id="10264588at2759"/>
<dbReference type="Proteomes" id="UP000001805">
    <property type="component" value="Chromosome 7, Linkage Group VII"/>
</dbReference>
<dbReference type="GO" id="GO:0005881">
    <property type="term" value="C:cytoplasmic microtubule"/>
    <property type="evidence" value="ECO:0000318"/>
    <property type="project" value="GO_Central"/>
</dbReference>
<dbReference type="GO" id="GO:0000776">
    <property type="term" value="C:kinetochore"/>
    <property type="evidence" value="ECO:0000318"/>
    <property type="project" value="GO_Central"/>
</dbReference>
<dbReference type="GO" id="GO:0005875">
    <property type="term" value="C:microtubule associated complex"/>
    <property type="evidence" value="ECO:0000318"/>
    <property type="project" value="GO_Central"/>
</dbReference>
<dbReference type="GO" id="GO:0005635">
    <property type="term" value="C:nuclear envelope"/>
    <property type="evidence" value="ECO:0000318"/>
    <property type="project" value="GO_Central"/>
</dbReference>
<dbReference type="GO" id="GO:0000922">
    <property type="term" value="C:spindle pole"/>
    <property type="evidence" value="ECO:0007669"/>
    <property type="project" value="UniProtKB-SubCell"/>
</dbReference>
<dbReference type="GO" id="GO:1990234">
    <property type="term" value="C:transferase complex"/>
    <property type="evidence" value="ECO:0007669"/>
    <property type="project" value="UniProtKB-ARBA"/>
</dbReference>
<dbReference type="GO" id="GO:0070840">
    <property type="term" value="F:dynein complex binding"/>
    <property type="evidence" value="ECO:0000318"/>
    <property type="project" value="GO_Central"/>
</dbReference>
<dbReference type="GO" id="GO:0051010">
    <property type="term" value="F:microtubule plus-end binding"/>
    <property type="evidence" value="ECO:0000318"/>
    <property type="project" value="GO_Central"/>
</dbReference>
<dbReference type="GO" id="GO:0051301">
    <property type="term" value="P:cell division"/>
    <property type="evidence" value="ECO:0007669"/>
    <property type="project" value="UniProtKB-KW"/>
</dbReference>
<dbReference type="GO" id="GO:0000132">
    <property type="term" value="P:establishment of mitotic spindle orientation"/>
    <property type="evidence" value="ECO:0000318"/>
    <property type="project" value="GO_Central"/>
</dbReference>
<dbReference type="GO" id="GO:0031023">
    <property type="term" value="P:microtubule organizing center organization"/>
    <property type="evidence" value="ECO:0000318"/>
    <property type="project" value="GO_Central"/>
</dbReference>
<dbReference type="GO" id="GO:0051012">
    <property type="term" value="P:microtubule sliding"/>
    <property type="evidence" value="ECO:0007669"/>
    <property type="project" value="UniProtKB-UniRule"/>
</dbReference>
<dbReference type="GO" id="GO:0007097">
    <property type="term" value="P:nuclear migration"/>
    <property type="evidence" value="ECO:0000318"/>
    <property type="project" value="GO_Central"/>
</dbReference>
<dbReference type="GO" id="GO:0047496">
    <property type="term" value="P:vesicle transport along microtubule"/>
    <property type="evidence" value="ECO:0000318"/>
    <property type="project" value="GO_Central"/>
</dbReference>
<dbReference type="CDD" id="cd00200">
    <property type="entry name" value="WD40"/>
    <property type="match status" value="1"/>
</dbReference>
<dbReference type="FunFam" id="2.130.10.10:FF:000342">
    <property type="entry name" value="Nuclear distribution protein PAC1"/>
    <property type="match status" value="1"/>
</dbReference>
<dbReference type="FunFam" id="1.20.960.30:FF:000002">
    <property type="entry name" value="Platelet-activating factor acetylhydrolase ib"/>
    <property type="match status" value="1"/>
</dbReference>
<dbReference type="Gene3D" id="1.20.960.30">
    <property type="match status" value="1"/>
</dbReference>
<dbReference type="Gene3D" id="2.130.10.10">
    <property type="entry name" value="YVTN repeat-like/Quinoprotein amine dehydrogenase"/>
    <property type="match status" value="1"/>
</dbReference>
<dbReference type="HAMAP" id="MF_03141">
    <property type="entry name" value="lis1"/>
    <property type="match status" value="1"/>
</dbReference>
<dbReference type="InterPro" id="IPR017252">
    <property type="entry name" value="Dynein_regulator_LIS1"/>
</dbReference>
<dbReference type="InterPro" id="IPR020472">
    <property type="entry name" value="G-protein_beta_WD-40_rep"/>
</dbReference>
<dbReference type="InterPro" id="IPR037190">
    <property type="entry name" value="LIS1_N"/>
</dbReference>
<dbReference type="InterPro" id="IPR006594">
    <property type="entry name" value="LisH"/>
</dbReference>
<dbReference type="InterPro" id="IPR056795">
    <property type="entry name" value="PAC1-like_LisH-like_dom"/>
</dbReference>
<dbReference type="InterPro" id="IPR015943">
    <property type="entry name" value="WD40/YVTN_repeat-like_dom_sf"/>
</dbReference>
<dbReference type="InterPro" id="IPR019775">
    <property type="entry name" value="WD40_repeat_CS"/>
</dbReference>
<dbReference type="InterPro" id="IPR036322">
    <property type="entry name" value="WD40_repeat_dom_sf"/>
</dbReference>
<dbReference type="InterPro" id="IPR001680">
    <property type="entry name" value="WD40_rpt"/>
</dbReference>
<dbReference type="PANTHER" id="PTHR22847:SF637">
    <property type="entry name" value="WD REPEAT DOMAIN 5B"/>
    <property type="match status" value="1"/>
</dbReference>
<dbReference type="PANTHER" id="PTHR22847">
    <property type="entry name" value="WD40 REPEAT PROTEIN"/>
    <property type="match status" value="1"/>
</dbReference>
<dbReference type="Pfam" id="PF24951">
    <property type="entry name" value="LisH_PAC1"/>
    <property type="match status" value="1"/>
</dbReference>
<dbReference type="Pfam" id="PF00400">
    <property type="entry name" value="WD40"/>
    <property type="match status" value="6"/>
</dbReference>
<dbReference type="PIRSF" id="PIRSF037647">
    <property type="entry name" value="Dynein_regulator_Lis1"/>
    <property type="match status" value="1"/>
</dbReference>
<dbReference type="PRINTS" id="PR00320">
    <property type="entry name" value="GPROTEINBRPT"/>
</dbReference>
<dbReference type="SMART" id="SM00320">
    <property type="entry name" value="WD40"/>
    <property type="match status" value="7"/>
</dbReference>
<dbReference type="SUPFAM" id="SSF109925">
    <property type="entry name" value="Lissencephaly-1 protein (Lis-1, PAF-AH alpha) N-terminal domain"/>
    <property type="match status" value="1"/>
</dbReference>
<dbReference type="SUPFAM" id="SSF50978">
    <property type="entry name" value="WD40 repeat-like"/>
    <property type="match status" value="1"/>
</dbReference>
<dbReference type="PROSITE" id="PS50896">
    <property type="entry name" value="LISH"/>
    <property type="match status" value="1"/>
</dbReference>
<dbReference type="PROSITE" id="PS00678">
    <property type="entry name" value="WD_REPEATS_1"/>
    <property type="match status" value="3"/>
</dbReference>
<dbReference type="PROSITE" id="PS50082">
    <property type="entry name" value="WD_REPEATS_2"/>
    <property type="match status" value="6"/>
</dbReference>
<dbReference type="PROSITE" id="PS50294">
    <property type="entry name" value="WD_REPEATS_REGION"/>
    <property type="match status" value="1"/>
</dbReference>
<reference key="1">
    <citation type="journal article" date="2003" name="Nature">
        <title>The genome sequence of the filamentous fungus Neurospora crassa.</title>
        <authorList>
            <person name="Galagan J.E."/>
            <person name="Calvo S.E."/>
            <person name="Borkovich K.A."/>
            <person name="Selker E.U."/>
            <person name="Read N.D."/>
            <person name="Jaffe D.B."/>
            <person name="FitzHugh W."/>
            <person name="Ma L.-J."/>
            <person name="Smirnov S."/>
            <person name="Purcell S."/>
            <person name="Rehman B."/>
            <person name="Elkins T."/>
            <person name="Engels R."/>
            <person name="Wang S."/>
            <person name="Nielsen C.B."/>
            <person name="Butler J."/>
            <person name="Endrizzi M."/>
            <person name="Qui D."/>
            <person name="Ianakiev P."/>
            <person name="Bell-Pedersen D."/>
            <person name="Nelson M.A."/>
            <person name="Werner-Washburne M."/>
            <person name="Selitrennikoff C.P."/>
            <person name="Kinsey J.A."/>
            <person name="Braun E.L."/>
            <person name="Zelter A."/>
            <person name="Schulte U."/>
            <person name="Kothe G.O."/>
            <person name="Jedd G."/>
            <person name="Mewes H.-W."/>
            <person name="Staben C."/>
            <person name="Marcotte E."/>
            <person name="Greenberg D."/>
            <person name="Roy A."/>
            <person name="Foley K."/>
            <person name="Naylor J."/>
            <person name="Stange-Thomann N."/>
            <person name="Barrett R."/>
            <person name="Gnerre S."/>
            <person name="Kamal M."/>
            <person name="Kamvysselis M."/>
            <person name="Mauceli E.W."/>
            <person name="Bielke C."/>
            <person name="Rudd S."/>
            <person name="Frishman D."/>
            <person name="Krystofova S."/>
            <person name="Rasmussen C."/>
            <person name="Metzenberg R.L."/>
            <person name="Perkins D.D."/>
            <person name="Kroken S."/>
            <person name="Cogoni C."/>
            <person name="Macino G."/>
            <person name="Catcheside D.E.A."/>
            <person name="Li W."/>
            <person name="Pratt R.J."/>
            <person name="Osmani S.A."/>
            <person name="DeSouza C.P.C."/>
            <person name="Glass N.L."/>
            <person name="Orbach M.J."/>
            <person name="Berglund J.A."/>
            <person name="Voelker R."/>
            <person name="Yarden O."/>
            <person name="Plamann M."/>
            <person name="Seiler S."/>
            <person name="Dunlap J.C."/>
            <person name="Radford A."/>
            <person name="Aramayo R."/>
            <person name="Natvig D.O."/>
            <person name="Alex L.A."/>
            <person name="Mannhaupt G."/>
            <person name="Ebbole D.J."/>
            <person name="Freitag M."/>
            <person name="Paulsen I."/>
            <person name="Sachs M.S."/>
            <person name="Lander E.S."/>
            <person name="Nusbaum C."/>
            <person name="Birren B.W."/>
        </authorList>
    </citation>
    <scope>NUCLEOTIDE SEQUENCE [LARGE SCALE GENOMIC DNA]</scope>
    <source>
        <strain>ATCC 24698 / 74-OR23-1A / CBS 708.71 / DSM 1257 / FGSC 987</strain>
    </source>
</reference>
<evidence type="ECO:0000255" key="1">
    <source>
        <dbReference type="HAMAP-Rule" id="MF_03141"/>
    </source>
</evidence>
<evidence type="ECO:0000256" key="2">
    <source>
        <dbReference type="SAM" id="MobiDB-lite"/>
    </source>
</evidence>
<comment type="function">
    <text evidence="1">Positively regulates the activity of the minus-end directed microtubule motor protein dynein. May enhance dynein-mediated microtubule sliding by targeting dynein to the microtubule plus end. Required for nuclear migration during vegetative growth as well as development. Required for retrograde early endosome (EE) transport from the hyphal tip. Required for localization of dynein to the mitotic spindle poles. Recruits additional proteins to the dynein complex at SPBs.</text>
</comment>
<comment type="subunit">
    <text evidence="1">Self-associates. Interacts with ro-11/nde1 and dynein.</text>
</comment>
<comment type="subcellular location">
    <subcellularLocation>
        <location>Cytoplasm</location>
        <location>Cytoskeleton</location>
    </subcellularLocation>
    <subcellularLocation>
        <location evidence="1">Cytoplasm</location>
        <location evidence="1">Cytoskeleton</location>
        <location evidence="1">Spindle pole</location>
    </subcellularLocation>
    <text evidence="1">Localizes to the plus ends of microtubules at the hyphal tip and the mitotic spindle poles.</text>
</comment>
<comment type="domain">
    <text evidence="1">Dimerization mediated by the LisH domain may be required to activate dynein.</text>
</comment>
<comment type="similarity">
    <text evidence="1">Belongs to the WD repeat LIS1/nudF family.</text>
</comment>